<evidence type="ECO:0000255" key="1"/>
<evidence type="ECO:0000269" key="2">
    <source>
    </source>
</evidence>
<evidence type="ECO:0000305" key="3"/>
<accession>P39106</accession>
<accession>D3DLP7</accession>
<sequence>MLALRRFILNQRSLRSCTIPILVGALIIILVLFQLVTHRNDALIRSSNVNSTNKKTLKDADPKVLIEAFGSPEVDPVDTIPVSPLELVPFYDQSIDTKRSSSWLINKKGYYKHFNELSLTDRCKFYFRTLYTLDDEWTNSVKKLEYSINDNEGVDEGKDANGNPMDEKSERLYRRKYDMFQAFERIRAYDRCFMQANPVNIQEIFPKSDKMSKERVQSKLIKTLNATFPNYDPDNFKKYDQFEFEHKMFPFINNFTTETFHEMVPKITSPFGKVLEQGFLPKFDHKTGKVQEYFKYEYDPSKTFWANWRDMSAKVAGRGIVLSLGSNQFPLAVKFIASLRFEGNTLPIQVVYRGDELSQELVDKLIYAARSPDFKPVENNYDNSTNVPQEIWFLDVSNTIHPKWRGDFGSYKSKWLVVLLNLLQEFVFLDIDAISYEKIDNYFKTTEYQKTGTVFYRERALRENVNERCIARYETLLPRNLESKNFQNSLLIDPDHALNECDNTLTTEEYIFKAFFHHRRQHQLEAGLFAVDKSKHTIPLVLAAMIHLAKNTAHCTHGDKENFWLGFLAAGHTYALQGVYSGAIGDYVKKTDLNGKRQEAAVEICSGQIAHMSTDKKTLLWVNGGGTFCKHDNAAKDDWKKDGDFKKFKDQFKTFEEMEKYYYITPISSKYVILPDPKSDDWHRASAGACGGYIWCATHKTLLKPYSYNHRTTHGELITLDEEQRLHIDAVNTVWSHANKDNTRSFTEEEIKELENSRHEQS</sequence>
<keyword id="KW-0325">Glycoprotein</keyword>
<keyword id="KW-0328">Glycosyltransferase</keyword>
<keyword id="KW-0333">Golgi apparatus</keyword>
<keyword id="KW-0472">Membrane</keyword>
<keyword id="KW-1185">Reference proteome</keyword>
<keyword id="KW-0735">Signal-anchor</keyword>
<keyword id="KW-0808">Transferase</keyword>
<keyword id="KW-0812">Transmembrane</keyword>
<keyword id="KW-1133">Transmembrane helix</keyword>
<protein>
    <recommendedName>
        <fullName>Alpha-1,3-mannosyltransferase MNN1</fullName>
        <ecNumber>2.4.1.-</ecNumber>
    </recommendedName>
</protein>
<organism>
    <name type="scientific">Saccharomyces cerevisiae (strain ATCC 204508 / S288c)</name>
    <name type="common">Baker's yeast</name>
    <dbReference type="NCBI Taxonomy" id="559292"/>
    <lineage>
        <taxon>Eukaryota</taxon>
        <taxon>Fungi</taxon>
        <taxon>Dikarya</taxon>
        <taxon>Ascomycota</taxon>
        <taxon>Saccharomycotina</taxon>
        <taxon>Saccharomycetes</taxon>
        <taxon>Saccharomycetales</taxon>
        <taxon>Saccharomycetaceae</taxon>
        <taxon>Saccharomyces</taxon>
    </lineage>
</organism>
<reference key="1">
    <citation type="journal article" date="1994" name="Proc. Natl. Acad. Sci. U.S.A.">
        <title>Cloning and analysis of the Saccharomyces cerevisiae MNN9 and MNN1 genes required for complex glycosylation of secreted proteins.</title>
        <authorList>
            <person name="Yip C.L."/>
            <person name="Welch S.K."/>
            <person name="Klebl F."/>
            <person name="Gilbert T."/>
            <person name="Seidel P."/>
            <person name="Grant F.J."/>
            <person name="O'Hara P.J."/>
            <person name="Mackay V.L."/>
        </authorList>
    </citation>
    <scope>NUCLEOTIDE SEQUENCE [GENOMIC DNA]</scope>
    <source>
        <strain>ATCC 26109 / X2180</strain>
    </source>
</reference>
<reference key="2">
    <citation type="journal article" date="1997" name="Nature">
        <title>The nucleotide sequence of Saccharomyces cerevisiae chromosome V.</title>
        <authorList>
            <person name="Dietrich F.S."/>
            <person name="Mulligan J.T."/>
            <person name="Hennessy K.M."/>
            <person name="Yelton M.A."/>
            <person name="Allen E."/>
            <person name="Araujo R."/>
            <person name="Aviles E."/>
            <person name="Berno A."/>
            <person name="Brennan T."/>
            <person name="Carpenter J."/>
            <person name="Chen E."/>
            <person name="Cherry J.M."/>
            <person name="Chung E."/>
            <person name="Duncan M."/>
            <person name="Guzman E."/>
            <person name="Hartzell G."/>
            <person name="Hunicke-Smith S."/>
            <person name="Hyman R.W."/>
            <person name="Kayser A."/>
            <person name="Komp C."/>
            <person name="Lashkari D."/>
            <person name="Lew H."/>
            <person name="Lin D."/>
            <person name="Mosedale D."/>
            <person name="Nakahara K."/>
            <person name="Namath A."/>
            <person name="Norgren R."/>
            <person name="Oefner P."/>
            <person name="Oh C."/>
            <person name="Petel F.X."/>
            <person name="Roberts D."/>
            <person name="Sehl P."/>
            <person name="Schramm S."/>
            <person name="Shogren T."/>
            <person name="Smith V."/>
            <person name="Taylor P."/>
            <person name="Wei Y."/>
            <person name="Botstein D."/>
            <person name="Davis R.W."/>
        </authorList>
    </citation>
    <scope>NUCLEOTIDE SEQUENCE [LARGE SCALE GENOMIC DNA]</scope>
    <source>
        <strain>ATCC 204508 / S288c</strain>
    </source>
</reference>
<reference key="3">
    <citation type="journal article" date="2014" name="G3 (Bethesda)">
        <title>The reference genome sequence of Saccharomyces cerevisiae: Then and now.</title>
        <authorList>
            <person name="Engel S.R."/>
            <person name="Dietrich F.S."/>
            <person name="Fisk D.G."/>
            <person name="Binkley G."/>
            <person name="Balakrishnan R."/>
            <person name="Costanzo M.C."/>
            <person name="Dwight S.S."/>
            <person name="Hitz B.C."/>
            <person name="Karra K."/>
            <person name="Nash R.S."/>
            <person name="Weng S."/>
            <person name="Wong E.D."/>
            <person name="Lloyd P."/>
            <person name="Skrzypek M.S."/>
            <person name="Miyasato S.R."/>
            <person name="Simison M."/>
            <person name="Cherry J.M."/>
        </authorList>
    </citation>
    <scope>GENOME REANNOTATION</scope>
    <source>
        <strain>ATCC 204508 / S288c</strain>
    </source>
</reference>
<reference key="4">
    <citation type="journal article" date="2003" name="Nature">
        <title>Global analysis of protein expression in yeast.</title>
        <authorList>
            <person name="Ghaemmaghami S."/>
            <person name="Huh W.-K."/>
            <person name="Bower K."/>
            <person name="Howson R.W."/>
            <person name="Belle A."/>
            <person name="Dephoure N."/>
            <person name="O'Shea E.K."/>
            <person name="Weissman J.S."/>
        </authorList>
    </citation>
    <scope>LEVEL OF PROTEIN EXPRESSION [LARGE SCALE ANALYSIS]</scope>
</reference>
<gene>
    <name type="primary">MNN1</name>
    <name type="ordered locus">YER001W</name>
</gene>
<proteinExistence type="evidence at protein level"/>
<comment type="function">
    <text>Responsible for addition of the terminal mannose residues to the outer chain of core N-linked polysaccharides and to O-linked mannotriose. Implicated in late Golgi modifications.</text>
</comment>
<comment type="pathway">
    <text>Protein modification; protein glycosylation.</text>
</comment>
<comment type="subcellular location">
    <subcellularLocation>
        <location evidence="3">Golgi apparatus membrane</location>
        <topology evidence="3">Single-pass type II membrane protein</topology>
    </subcellularLocation>
</comment>
<comment type="miscellaneous">
    <text evidence="2">Present with 1780 molecules/cell in log phase SD medium.</text>
</comment>
<comment type="similarity">
    <text evidence="3">Belongs to the MNN1/MNT family.</text>
</comment>
<feature type="chain" id="PRO_0000080558" description="Alpha-1,3-mannosyltransferase MNN1">
    <location>
        <begin position="1"/>
        <end position="762"/>
    </location>
</feature>
<feature type="topological domain" description="Cytoplasmic" evidence="1">
    <location>
        <begin position="1"/>
        <end position="16"/>
    </location>
</feature>
<feature type="transmembrane region" description="Helical; Signal-anchor for type II membrane protein" evidence="1">
    <location>
        <begin position="17"/>
        <end position="33"/>
    </location>
</feature>
<feature type="topological domain" description="Lumenal" evidence="1">
    <location>
        <begin position="34"/>
        <end position="762"/>
    </location>
</feature>
<feature type="glycosylation site" description="N-linked (GlcNAc...) asparagine" evidence="1">
    <location>
        <position position="50"/>
    </location>
</feature>
<feature type="glycosylation site" description="N-linked (GlcNAc...) asparagine" evidence="1">
    <location>
        <position position="225"/>
    </location>
</feature>
<feature type="glycosylation site" description="N-linked (GlcNAc...) asparagine" evidence="1">
    <location>
        <position position="254"/>
    </location>
</feature>
<feature type="glycosylation site" description="N-linked (GlcNAc...) asparagine" evidence="1">
    <location>
        <position position="383"/>
    </location>
</feature>
<feature type="sequence conflict" description="In Ref. 1; AAA53676." evidence="3" ref="1">
    <original>S</original>
    <variation>T</variation>
    <location>
        <position position="338"/>
    </location>
</feature>
<dbReference type="EC" id="2.4.1.-"/>
<dbReference type="EMBL" id="L23753">
    <property type="protein sequence ID" value="AAA53676.1"/>
    <property type="molecule type" value="Genomic_DNA"/>
</dbReference>
<dbReference type="EMBL" id="U18778">
    <property type="protein sequence ID" value="AAB64534.1"/>
    <property type="molecule type" value="Genomic_DNA"/>
</dbReference>
<dbReference type="EMBL" id="BK006939">
    <property type="protein sequence ID" value="DAA07651.1"/>
    <property type="molecule type" value="Genomic_DNA"/>
</dbReference>
<dbReference type="PIR" id="S50459">
    <property type="entry name" value="S50459"/>
</dbReference>
<dbReference type="RefSeq" id="NP_010916.1">
    <property type="nucleotide sequence ID" value="NM_001178892.1"/>
</dbReference>
<dbReference type="SMR" id="P39106"/>
<dbReference type="BioGRID" id="36731">
    <property type="interactions" value="77"/>
</dbReference>
<dbReference type="DIP" id="DIP-7589N"/>
<dbReference type="FunCoup" id="P39106">
    <property type="interactions" value="145"/>
</dbReference>
<dbReference type="IntAct" id="P39106">
    <property type="interactions" value="21"/>
</dbReference>
<dbReference type="MINT" id="P39106"/>
<dbReference type="STRING" id="4932.YER001W"/>
<dbReference type="CAZy" id="GT71">
    <property type="family name" value="Glycosyltransferase Family 71"/>
</dbReference>
<dbReference type="GlyCosmos" id="P39106">
    <property type="glycosylation" value="4 sites, No reported glycans"/>
</dbReference>
<dbReference type="GlyGen" id="P39106">
    <property type="glycosylation" value="5 sites"/>
</dbReference>
<dbReference type="SwissPalm" id="P39106"/>
<dbReference type="PaxDb" id="4932-YER001W"/>
<dbReference type="PeptideAtlas" id="P39106"/>
<dbReference type="EnsemblFungi" id="YER001W_mRNA">
    <property type="protein sequence ID" value="YER001W"/>
    <property type="gene ID" value="YER001W"/>
</dbReference>
<dbReference type="GeneID" id="856718"/>
<dbReference type="KEGG" id="sce:YER001W"/>
<dbReference type="AGR" id="SGD:S000000803"/>
<dbReference type="SGD" id="S000000803">
    <property type="gene designation" value="MNN1"/>
</dbReference>
<dbReference type="VEuPathDB" id="FungiDB:YER001W"/>
<dbReference type="eggNOG" id="ENOG502RZ48">
    <property type="taxonomic scope" value="Eukaryota"/>
</dbReference>
<dbReference type="GeneTree" id="ENSGT00940000176340"/>
<dbReference type="HOGENOM" id="CLU_015387_1_1_1"/>
<dbReference type="InParanoid" id="P39106"/>
<dbReference type="OMA" id="GHINGED"/>
<dbReference type="OrthoDB" id="430354at2759"/>
<dbReference type="BioCyc" id="MetaCyc:YER001W-MONOMER"/>
<dbReference type="BioCyc" id="YEAST:YER001W-MONOMER"/>
<dbReference type="UniPathway" id="UPA00378"/>
<dbReference type="BioGRID-ORCS" id="856718">
    <property type="hits" value="0 hits in 10 CRISPR screens"/>
</dbReference>
<dbReference type="PRO" id="PR:P39106"/>
<dbReference type="Proteomes" id="UP000002311">
    <property type="component" value="Chromosome V"/>
</dbReference>
<dbReference type="RNAct" id="P39106">
    <property type="molecule type" value="protein"/>
</dbReference>
<dbReference type="GO" id="GO:0005794">
    <property type="term" value="C:Golgi apparatus"/>
    <property type="evidence" value="ECO:0000314"/>
    <property type="project" value="SGD"/>
</dbReference>
<dbReference type="GO" id="GO:0000139">
    <property type="term" value="C:Golgi membrane"/>
    <property type="evidence" value="ECO:0007669"/>
    <property type="project" value="UniProtKB-SubCell"/>
</dbReference>
<dbReference type="GO" id="GO:0000033">
    <property type="term" value="F:alpha-1,3-mannosyltransferase activity"/>
    <property type="evidence" value="ECO:0000315"/>
    <property type="project" value="SGD"/>
</dbReference>
<dbReference type="GO" id="GO:0006491">
    <property type="term" value="P:N-glycan processing"/>
    <property type="evidence" value="ECO:0000315"/>
    <property type="project" value="SGD"/>
</dbReference>
<dbReference type="GO" id="GO:0006493">
    <property type="term" value="P:protein O-linked glycosylation"/>
    <property type="evidence" value="ECO:0000314"/>
    <property type="project" value="SGD"/>
</dbReference>
<dbReference type="InterPro" id="IPR022751">
    <property type="entry name" value="Alpha_mannosyltransferase"/>
</dbReference>
<dbReference type="InterPro" id="IPR029044">
    <property type="entry name" value="Nucleotide-diphossugar_trans"/>
</dbReference>
<dbReference type="PANTHER" id="PTHR31392">
    <property type="entry name" value="ALPHA-1,3-MANNOSYLTRANSFERASE MNN1-RELATED"/>
    <property type="match status" value="1"/>
</dbReference>
<dbReference type="PANTHER" id="PTHR31392:SF1">
    <property type="entry name" value="ALPHA-1,3-MANNOSYLTRANSFERASE MNN1-RELATED"/>
    <property type="match status" value="1"/>
</dbReference>
<dbReference type="Pfam" id="PF11051">
    <property type="entry name" value="Mannosyl_trans3"/>
    <property type="match status" value="1"/>
</dbReference>
<dbReference type="SUPFAM" id="SSF53448">
    <property type="entry name" value="Nucleotide-diphospho-sugar transferases"/>
    <property type="match status" value="1"/>
</dbReference>
<name>MNN1_YEAST</name>